<keyword id="KW-0067">ATP-binding</keyword>
<keyword id="KW-0378">Hydrolase</keyword>
<keyword id="KW-0460">Magnesium</keyword>
<keyword id="KW-0479">Metal-binding</keyword>
<keyword id="KW-0511">Multifunctional enzyme</keyword>
<keyword id="KW-0533">Nickel</keyword>
<keyword id="KW-0547">Nucleotide-binding</keyword>
<keyword id="KW-0548">Nucleotidyltransferase</keyword>
<keyword id="KW-1185">Reference proteome</keyword>
<keyword id="KW-0692">RNA repair</keyword>
<keyword id="KW-0694">RNA-binding</keyword>
<keyword id="KW-0808">Transferase</keyword>
<keyword id="KW-0819">tRNA processing</keyword>
<gene>
    <name evidence="1" type="primary">cca</name>
    <name type="ordered locus">ABO_2052</name>
</gene>
<organism>
    <name type="scientific">Alcanivorax borkumensis (strain ATCC 700651 / DSM 11573 / NCIMB 13689 / SK2)</name>
    <dbReference type="NCBI Taxonomy" id="393595"/>
    <lineage>
        <taxon>Bacteria</taxon>
        <taxon>Pseudomonadati</taxon>
        <taxon>Pseudomonadota</taxon>
        <taxon>Gammaproteobacteria</taxon>
        <taxon>Oceanospirillales</taxon>
        <taxon>Alcanivoracaceae</taxon>
        <taxon>Alcanivorax</taxon>
    </lineage>
</organism>
<sequence>MNVYLVGGAVRDSLLGLPVTEKDWVVVGATPKEMEANGFRPVGKDFPVFLHPKTQEEYALARTERKSGHGYGGFTFHAASTVSLEEDLIRRDLTINAMAQARGGEIIDPFNGRVDLKARLLRHVSPAFAEDPLRVLRVARFAARYHWLGFQVADDTLMLMKQLSDSGELGYLVAERVWKETSRALMERDPQVFFQVLHRCGALHALFPELAALDGVPQPEQHHPEVDTLLHQFLCLKQAARLGLSLNARYALLCHDLGKGKTPKEEWPRHIAHEIRSARLSKKVSKRLKVPKEAATLATLVAEFHTHSHRALELKPATVWKLFKSLDILRRPERLTDFLGACEADARGRTSFENREYPQASYLQGAADAARQVDIQALQAQGHEGPALGEAIEQARIDAIATFKQQELNP</sequence>
<reference key="1">
    <citation type="journal article" date="2006" name="Nat. Biotechnol.">
        <title>Genome sequence of the ubiquitous hydrocarbon-degrading marine bacterium Alcanivorax borkumensis.</title>
        <authorList>
            <person name="Schneiker S."/>
            <person name="Martins dos Santos V.A.P."/>
            <person name="Bartels D."/>
            <person name="Bekel T."/>
            <person name="Brecht M."/>
            <person name="Buhrmester J."/>
            <person name="Chernikova T.N."/>
            <person name="Denaro R."/>
            <person name="Ferrer M."/>
            <person name="Gertler C."/>
            <person name="Goesmann A."/>
            <person name="Golyshina O.V."/>
            <person name="Kaminski F."/>
            <person name="Khachane A.N."/>
            <person name="Lang S."/>
            <person name="Linke B."/>
            <person name="McHardy A.C."/>
            <person name="Meyer F."/>
            <person name="Nechitaylo T."/>
            <person name="Puehler A."/>
            <person name="Regenhardt D."/>
            <person name="Rupp O."/>
            <person name="Sabirova J.S."/>
            <person name="Selbitschka W."/>
            <person name="Yakimov M.M."/>
            <person name="Timmis K.N."/>
            <person name="Vorhoelter F.-J."/>
            <person name="Weidner S."/>
            <person name="Kaiser O."/>
            <person name="Golyshin P.N."/>
        </authorList>
    </citation>
    <scope>NUCLEOTIDE SEQUENCE [LARGE SCALE GENOMIC DNA]</scope>
    <source>
        <strain>ATCC 700651 / DSM 11573 / NCIMB 13689 / SK2</strain>
    </source>
</reference>
<feature type="chain" id="PRO_1000054246" description="Multifunctional CCA protein">
    <location>
        <begin position="1"/>
        <end position="410"/>
    </location>
</feature>
<feature type="domain" description="HD" evidence="1">
    <location>
        <begin position="228"/>
        <end position="329"/>
    </location>
</feature>
<feature type="binding site" evidence="1">
    <location>
        <position position="8"/>
    </location>
    <ligand>
        <name>ATP</name>
        <dbReference type="ChEBI" id="CHEBI:30616"/>
    </ligand>
</feature>
<feature type="binding site" evidence="1">
    <location>
        <position position="8"/>
    </location>
    <ligand>
        <name>CTP</name>
        <dbReference type="ChEBI" id="CHEBI:37563"/>
    </ligand>
</feature>
<feature type="binding site" evidence="1">
    <location>
        <position position="11"/>
    </location>
    <ligand>
        <name>ATP</name>
        <dbReference type="ChEBI" id="CHEBI:30616"/>
    </ligand>
</feature>
<feature type="binding site" evidence="1">
    <location>
        <position position="11"/>
    </location>
    <ligand>
        <name>CTP</name>
        <dbReference type="ChEBI" id="CHEBI:37563"/>
    </ligand>
</feature>
<feature type="binding site" evidence="1">
    <location>
        <position position="21"/>
    </location>
    <ligand>
        <name>Mg(2+)</name>
        <dbReference type="ChEBI" id="CHEBI:18420"/>
    </ligand>
</feature>
<feature type="binding site" evidence="1">
    <location>
        <position position="23"/>
    </location>
    <ligand>
        <name>Mg(2+)</name>
        <dbReference type="ChEBI" id="CHEBI:18420"/>
    </ligand>
</feature>
<feature type="binding site" evidence="1">
    <location>
        <position position="91"/>
    </location>
    <ligand>
        <name>ATP</name>
        <dbReference type="ChEBI" id="CHEBI:30616"/>
    </ligand>
</feature>
<feature type="binding site" evidence="1">
    <location>
        <position position="91"/>
    </location>
    <ligand>
        <name>CTP</name>
        <dbReference type="ChEBI" id="CHEBI:37563"/>
    </ligand>
</feature>
<feature type="binding site" evidence="1">
    <location>
        <position position="137"/>
    </location>
    <ligand>
        <name>ATP</name>
        <dbReference type="ChEBI" id="CHEBI:30616"/>
    </ligand>
</feature>
<feature type="binding site" evidence="1">
    <location>
        <position position="137"/>
    </location>
    <ligand>
        <name>CTP</name>
        <dbReference type="ChEBI" id="CHEBI:37563"/>
    </ligand>
</feature>
<feature type="binding site" evidence="1">
    <location>
        <position position="140"/>
    </location>
    <ligand>
        <name>ATP</name>
        <dbReference type="ChEBI" id="CHEBI:30616"/>
    </ligand>
</feature>
<feature type="binding site" evidence="1">
    <location>
        <position position="140"/>
    </location>
    <ligand>
        <name>CTP</name>
        <dbReference type="ChEBI" id="CHEBI:37563"/>
    </ligand>
</feature>
<evidence type="ECO:0000255" key="1">
    <source>
        <dbReference type="HAMAP-Rule" id="MF_01261"/>
    </source>
</evidence>
<protein>
    <recommendedName>
        <fullName evidence="1">Multifunctional CCA protein</fullName>
    </recommendedName>
    <domain>
        <recommendedName>
            <fullName evidence="1">CCA-adding enzyme</fullName>
            <ecNumber evidence="1">2.7.7.72</ecNumber>
        </recommendedName>
        <alternativeName>
            <fullName evidence="1">CCA tRNA nucleotidyltransferase</fullName>
        </alternativeName>
        <alternativeName>
            <fullName evidence="1">tRNA CCA-pyrophosphorylase</fullName>
        </alternativeName>
        <alternativeName>
            <fullName evidence="1">tRNA adenylyl-/cytidylyl-transferase</fullName>
        </alternativeName>
        <alternativeName>
            <fullName evidence="1">tRNA nucleotidyltransferase</fullName>
        </alternativeName>
        <alternativeName>
            <fullName evidence="1">tRNA-NT</fullName>
        </alternativeName>
    </domain>
    <domain>
        <recommendedName>
            <fullName evidence="1">2'-nucleotidase</fullName>
            <ecNumber evidence="1">3.1.3.-</ecNumber>
        </recommendedName>
    </domain>
    <domain>
        <recommendedName>
            <fullName evidence="1">2',3'-cyclic phosphodiesterase</fullName>
            <ecNumber evidence="1">3.1.4.-</ecNumber>
        </recommendedName>
    </domain>
    <domain>
        <recommendedName>
            <fullName evidence="1">Phosphatase</fullName>
            <ecNumber evidence="1">3.1.3.-</ecNumber>
        </recommendedName>
    </domain>
</protein>
<proteinExistence type="inferred from homology"/>
<comment type="function">
    <text evidence="1">Catalyzes the addition and repair of the essential 3'-terminal CCA sequence in tRNAs without using a nucleic acid template. Adds these three nucleotides in the order of C, C, and A to the tRNA nucleotide-73, using CTP and ATP as substrates and producing inorganic pyrophosphate. tRNA 3'-terminal CCA addition is required both for tRNA processing and repair. Also involved in tRNA surveillance by mediating tandem CCA addition to generate a CCACCA at the 3' terminus of unstable tRNAs. While stable tRNAs receive only 3'-terminal CCA, unstable tRNAs are marked with CCACCA and rapidly degraded.</text>
</comment>
<comment type="catalytic activity">
    <reaction evidence="1">
        <text>a tRNA precursor + 2 CTP + ATP = a tRNA with a 3' CCA end + 3 diphosphate</text>
        <dbReference type="Rhea" id="RHEA:14433"/>
        <dbReference type="Rhea" id="RHEA-COMP:10465"/>
        <dbReference type="Rhea" id="RHEA-COMP:10468"/>
        <dbReference type="ChEBI" id="CHEBI:30616"/>
        <dbReference type="ChEBI" id="CHEBI:33019"/>
        <dbReference type="ChEBI" id="CHEBI:37563"/>
        <dbReference type="ChEBI" id="CHEBI:74896"/>
        <dbReference type="ChEBI" id="CHEBI:83071"/>
        <dbReference type="EC" id="2.7.7.72"/>
    </reaction>
</comment>
<comment type="catalytic activity">
    <reaction evidence="1">
        <text>a tRNA with a 3' CCA end + 2 CTP + ATP = a tRNA with a 3' CCACCA end + 3 diphosphate</text>
        <dbReference type="Rhea" id="RHEA:76235"/>
        <dbReference type="Rhea" id="RHEA-COMP:10468"/>
        <dbReference type="Rhea" id="RHEA-COMP:18655"/>
        <dbReference type="ChEBI" id="CHEBI:30616"/>
        <dbReference type="ChEBI" id="CHEBI:33019"/>
        <dbReference type="ChEBI" id="CHEBI:37563"/>
        <dbReference type="ChEBI" id="CHEBI:83071"/>
        <dbReference type="ChEBI" id="CHEBI:195187"/>
    </reaction>
    <physiologicalReaction direction="left-to-right" evidence="1">
        <dbReference type="Rhea" id="RHEA:76236"/>
    </physiologicalReaction>
</comment>
<comment type="cofactor">
    <cofactor evidence="1">
        <name>Mg(2+)</name>
        <dbReference type="ChEBI" id="CHEBI:18420"/>
    </cofactor>
    <text evidence="1">Magnesium is required for nucleotidyltransferase activity.</text>
</comment>
<comment type="cofactor">
    <cofactor evidence="1">
        <name>Ni(2+)</name>
        <dbReference type="ChEBI" id="CHEBI:49786"/>
    </cofactor>
    <text evidence="1">Nickel for phosphatase activity.</text>
</comment>
<comment type="subunit">
    <text evidence="1">Monomer. Can also form homodimers and oligomers.</text>
</comment>
<comment type="domain">
    <text evidence="1">Comprises two domains: an N-terminal domain containing the nucleotidyltransferase activity and a C-terminal HD domain associated with both phosphodiesterase and phosphatase activities.</text>
</comment>
<comment type="miscellaneous">
    <text evidence="1">A single active site specifically recognizes both ATP and CTP and is responsible for their addition.</text>
</comment>
<comment type="similarity">
    <text evidence="1">Belongs to the tRNA nucleotidyltransferase/poly(A) polymerase family. Bacterial CCA-adding enzyme type 1 subfamily.</text>
</comment>
<dbReference type="EC" id="2.7.7.72" evidence="1"/>
<dbReference type="EC" id="3.1.3.-" evidence="1"/>
<dbReference type="EC" id="3.1.4.-" evidence="1"/>
<dbReference type="EMBL" id="AM286690">
    <property type="protein sequence ID" value="CAL17500.1"/>
    <property type="molecule type" value="Genomic_DNA"/>
</dbReference>
<dbReference type="RefSeq" id="WP_011589331.1">
    <property type="nucleotide sequence ID" value="NC_008260.1"/>
</dbReference>
<dbReference type="SMR" id="Q0VMU8"/>
<dbReference type="STRING" id="393595.ABO_2052"/>
<dbReference type="KEGG" id="abo:ABO_2052"/>
<dbReference type="eggNOG" id="COG0617">
    <property type="taxonomic scope" value="Bacteria"/>
</dbReference>
<dbReference type="HOGENOM" id="CLU_015961_1_1_6"/>
<dbReference type="OrthoDB" id="9805698at2"/>
<dbReference type="Proteomes" id="UP000008871">
    <property type="component" value="Chromosome"/>
</dbReference>
<dbReference type="GO" id="GO:0005524">
    <property type="term" value="F:ATP binding"/>
    <property type="evidence" value="ECO:0007669"/>
    <property type="project" value="UniProtKB-UniRule"/>
</dbReference>
<dbReference type="GO" id="GO:0004810">
    <property type="term" value="F:CCA tRNA nucleotidyltransferase activity"/>
    <property type="evidence" value="ECO:0007669"/>
    <property type="project" value="UniProtKB-UniRule"/>
</dbReference>
<dbReference type="GO" id="GO:0004112">
    <property type="term" value="F:cyclic-nucleotide phosphodiesterase activity"/>
    <property type="evidence" value="ECO:0007669"/>
    <property type="project" value="UniProtKB-UniRule"/>
</dbReference>
<dbReference type="GO" id="GO:0000287">
    <property type="term" value="F:magnesium ion binding"/>
    <property type="evidence" value="ECO:0007669"/>
    <property type="project" value="UniProtKB-UniRule"/>
</dbReference>
<dbReference type="GO" id="GO:0016791">
    <property type="term" value="F:phosphatase activity"/>
    <property type="evidence" value="ECO:0007669"/>
    <property type="project" value="UniProtKB-UniRule"/>
</dbReference>
<dbReference type="GO" id="GO:0000049">
    <property type="term" value="F:tRNA binding"/>
    <property type="evidence" value="ECO:0007669"/>
    <property type="project" value="UniProtKB-UniRule"/>
</dbReference>
<dbReference type="GO" id="GO:0042245">
    <property type="term" value="P:RNA repair"/>
    <property type="evidence" value="ECO:0007669"/>
    <property type="project" value="UniProtKB-KW"/>
</dbReference>
<dbReference type="GO" id="GO:0001680">
    <property type="term" value="P:tRNA 3'-terminal CCA addition"/>
    <property type="evidence" value="ECO:0007669"/>
    <property type="project" value="UniProtKB-UniRule"/>
</dbReference>
<dbReference type="CDD" id="cd00077">
    <property type="entry name" value="HDc"/>
    <property type="match status" value="1"/>
</dbReference>
<dbReference type="CDD" id="cd05398">
    <property type="entry name" value="NT_ClassII-CCAase"/>
    <property type="match status" value="1"/>
</dbReference>
<dbReference type="Gene3D" id="3.30.460.10">
    <property type="entry name" value="Beta Polymerase, domain 2"/>
    <property type="match status" value="1"/>
</dbReference>
<dbReference type="Gene3D" id="1.10.3090.10">
    <property type="entry name" value="cca-adding enzyme, domain 2"/>
    <property type="match status" value="1"/>
</dbReference>
<dbReference type="HAMAP" id="MF_01261">
    <property type="entry name" value="CCA_bact_type1"/>
    <property type="match status" value="1"/>
</dbReference>
<dbReference type="HAMAP" id="MF_01262">
    <property type="entry name" value="CCA_bact_type2"/>
    <property type="match status" value="1"/>
</dbReference>
<dbReference type="InterPro" id="IPR012006">
    <property type="entry name" value="CCA_bact"/>
</dbReference>
<dbReference type="InterPro" id="IPR003607">
    <property type="entry name" value="HD/PDEase_dom"/>
</dbReference>
<dbReference type="InterPro" id="IPR006674">
    <property type="entry name" value="HD_domain"/>
</dbReference>
<dbReference type="InterPro" id="IPR043519">
    <property type="entry name" value="NT_sf"/>
</dbReference>
<dbReference type="InterPro" id="IPR002646">
    <property type="entry name" value="PolA_pol_head_dom"/>
</dbReference>
<dbReference type="InterPro" id="IPR032828">
    <property type="entry name" value="PolyA_RNA-bd"/>
</dbReference>
<dbReference type="InterPro" id="IPR050124">
    <property type="entry name" value="tRNA_CCA-adding_enzyme"/>
</dbReference>
<dbReference type="NCBIfam" id="NF008137">
    <property type="entry name" value="PRK10885.1"/>
    <property type="match status" value="1"/>
</dbReference>
<dbReference type="PANTHER" id="PTHR47545">
    <property type="entry name" value="MULTIFUNCTIONAL CCA PROTEIN"/>
    <property type="match status" value="1"/>
</dbReference>
<dbReference type="PANTHER" id="PTHR47545:SF1">
    <property type="entry name" value="MULTIFUNCTIONAL CCA PROTEIN"/>
    <property type="match status" value="1"/>
</dbReference>
<dbReference type="Pfam" id="PF01966">
    <property type="entry name" value="HD"/>
    <property type="match status" value="1"/>
</dbReference>
<dbReference type="Pfam" id="PF01743">
    <property type="entry name" value="PolyA_pol"/>
    <property type="match status" value="1"/>
</dbReference>
<dbReference type="Pfam" id="PF12627">
    <property type="entry name" value="PolyA_pol_RNAbd"/>
    <property type="match status" value="1"/>
</dbReference>
<dbReference type="PIRSF" id="PIRSF000813">
    <property type="entry name" value="CCA_bact"/>
    <property type="match status" value="1"/>
</dbReference>
<dbReference type="SUPFAM" id="SSF81301">
    <property type="entry name" value="Nucleotidyltransferase"/>
    <property type="match status" value="1"/>
</dbReference>
<dbReference type="SUPFAM" id="SSF81891">
    <property type="entry name" value="Poly A polymerase C-terminal region-like"/>
    <property type="match status" value="1"/>
</dbReference>
<dbReference type="PROSITE" id="PS51831">
    <property type="entry name" value="HD"/>
    <property type="match status" value="1"/>
</dbReference>
<name>CCA_ALCBS</name>
<accession>Q0VMU8</accession>